<feature type="chain" id="PRO_1000122666" description="ATP phosphoribosyltransferase regulatory subunit">
    <location>
        <begin position="1"/>
        <end position="419"/>
    </location>
</feature>
<keyword id="KW-0028">Amino-acid biosynthesis</keyword>
<keyword id="KW-0963">Cytoplasm</keyword>
<keyword id="KW-0368">Histidine biosynthesis</keyword>
<keyword id="KW-1185">Reference proteome</keyword>
<accession>B8I5U8</accession>
<evidence type="ECO:0000255" key="1">
    <source>
        <dbReference type="HAMAP-Rule" id="MF_00125"/>
    </source>
</evidence>
<reference key="1">
    <citation type="submission" date="2009-01" db="EMBL/GenBank/DDBJ databases">
        <title>Complete sequence of Clostridium cellulolyticum H10.</title>
        <authorList>
            <consortium name="US DOE Joint Genome Institute"/>
            <person name="Lucas S."/>
            <person name="Copeland A."/>
            <person name="Lapidus A."/>
            <person name="Glavina del Rio T."/>
            <person name="Dalin E."/>
            <person name="Tice H."/>
            <person name="Bruce D."/>
            <person name="Goodwin L."/>
            <person name="Pitluck S."/>
            <person name="Chertkov O."/>
            <person name="Saunders E."/>
            <person name="Brettin T."/>
            <person name="Detter J.C."/>
            <person name="Han C."/>
            <person name="Larimer F."/>
            <person name="Land M."/>
            <person name="Hauser L."/>
            <person name="Kyrpides N."/>
            <person name="Ivanova N."/>
            <person name="Zhou J."/>
            <person name="Richardson P."/>
        </authorList>
    </citation>
    <scope>NUCLEOTIDE SEQUENCE [LARGE SCALE GENOMIC DNA]</scope>
    <source>
        <strain>ATCC 35319 / DSM 5812 / JCM 6584 / H10</strain>
    </source>
</reference>
<dbReference type="EMBL" id="CP001348">
    <property type="protein sequence ID" value="ACL74765.1"/>
    <property type="molecule type" value="Genomic_DNA"/>
</dbReference>
<dbReference type="RefSeq" id="WP_012634828.1">
    <property type="nucleotide sequence ID" value="NC_011898.1"/>
</dbReference>
<dbReference type="SMR" id="B8I5U8"/>
<dbReference type="STRING" id="394503.Ccel_0380"/>
<dbReference type="KEGG" id="cce:Ccel_0380"/>
<dbReference type="eggNOG" id="COG0124">
    <property type="taxonomic scope" value="Bacteria"/>
</dbReference>
<dbReference type="HOGENOM" id="CLU_025113_0_2_9"/>
<dbReference type="OrthoDB" id="9800814at2"/>
<dbReference type="UniPathway" id="UPA00031">
    <property type="reaction ID" value="UER00006"/>
</dbReference>
<dbReference type="Proteomes" id="UP000001349">
    <property type="component" value="Chromosome"/>
</dbReference>
<dbReference type="GO" id="GO:0005737">
    <property type="term" value="C:cytoplasm"/>
    <property type="evidence" value="ECO:0007669"/>
    <property type="project" value="UniProtKB-SubCell"/>
</dbReference>
<dbReference type="GO" id="GO:0140096">
    <property type="term" value="F:catalytic activity, acting on a protein"/>
    <property type="evidence" value="ECO:0007669"/>
    <property type="project" value="UniProtKB-ARBA"/>
</dbReference>
<dbReference type="GO" id="GO:0004821">
    <property type="term" value="F:histidine-tRNA ligase activity"/>
    <property type="evidence" value="ECO:0007669"/>
    <property type="project" value="TreeGrafter"/>
</dbReference>
<dbReference type="GO" id="GO:0016740">
    <property type="term" value="F:transferase activity"/>
    <property type="evidence" value="ECO:0007669"/>
    <property type="project" value="UniProtKB-ARBA"/>
</dbReference>
<dbReference type="GO" id="GO:0006427">
    <property type="term" value="P:histidyl-tRNA aminoacylation"/>
    <property type="evidence" value="ECO:0007669"/>
    <property type="project" value="TreeGrafter"/>
</dbReference>
<dbReference type="GO" id="GO:0000105">
    <property type="term" value="P:L-histidine biosynthetic process"/>
    <property type="evidence" value="ECO:0007669"/>
    <property type="project" value="UniProtKB-UniRule"/>
</dbReference>
<dbReference type="CDD" id="cd00773">
    <property type="entry name" value="HisRS-like_core"/>
    <property type="match status" value="1"/>
</dbReference>
<dbReference type="Gene3D" id="3.30.930.10">
    <property type="entry name" value="Bira Bifunctional Protein, Domain 2"/>
    <property type="match status" value="1"/>
</dbReference>
<dbReference type="HAMAP" id="MF_00125">
    <property type="entry name" value="HisZ"/>
    <property type="match status" value="1"/>
</dbReference>
<dbReference type="InterPro" id="IPR006195">
    <property type="entry name" value="aa-tRNA-synth_II"/>
</dbReference>
<dbReference type="InterPro" id="IPR045864">
    <property type="entry name" value="aa-tRNA-synth_II/BPL/LPL"/>
</dbReference>
<dbReference type="InterPro" id="IPR041715">
    <property type="entry name" value="HisRS-like_core"/>
</dbReference>
<dbReference type="InterPro" id="IPR004516">
    <property type="entry name" value="HisRS/HisZ"/>
</dbReference>
<dbReference type="InterPro" id="IPR004517">
    <property type="entry name" value="HisZ"/>
</dbReference>
<dbReference type="NCBIfam" id="TIGR00443">
    <property type="entry name" value="hisZ_biosyn_reg"/>
    <property type="match status" value="1"/>
</dbReference>
<dbReference type="PANTHER" id="PTHR43707:SF6">
    <property type="entry name" value="ATP PHOSPHORIBOSYLTRANSFERASE REGULATORY SUBUNIT"/>
    <property type="match status" value="1"/>
</dbReference>
<dbReference type="PANTHER" id="PTHR43707">
    <property type="entry name" value="HISTIDYL-TRNA SYNTHETASE"/>
    <property type="match status" value="1"/>
</dbReference>
<dbReference type="Pfam" id="PF13393">
    <property type="entry name" value="tRNA-synt_His"/>
    <property type="match status" value="1"/>
</dbReference>
<dbReference type="PIRSF" id="PIRSF001549">
    <property type="entry name" value="His-tRNA_synth"/>
    <property type="match status" value="1"/>
</dbReference>
<dbReference type="SUPFAM" id="SSF55681">
    <property type="entry name" value="Class II aaRS and biotin synthetases"/>
    <property type="match status" value="1"/>
</dbReference>
<dbReference type="PROSITE" id="PS50862">
    <property type="entry name" value="AA_TRNA_LIGASE_II"/>
    <property type="match status" value="1"/>
</dbReference>
<organism>
    <name type="scientific">Ruminiclostridium cellulolyticum (strain ATCC 35319 / DSM 5812 / JCM 6584 / H10)</name>
    <name type="common">Clostridium cellulolyticum</name>
    <dbReference type="NCBI Taxonomy" id="394503"/>
    <lineage>
        <taxon>Bacteria</taxon>
        <taxon>Bacillati</taxon>
        <taxon>Bacillota</taxon>
        <taxon>Clostridia</taxon>
        <taxon>Eubacteriales</taxon>
        <taxon>Oscillospiraceae</taxon>
        <taxon>Ruminiclostridium</taxon>
    </lineage>
</organism>
<sequence length="419" mass="47475">MSRWKIYTPDGVQDILFDECYKKREIEKRIRNTFRSYGYYEIETPTIEFFDVFSSEIEHFPQESMVKFFDQKGRILVLRPDITVPVARITATKNRDVQVPIKYSYIGNVFRFNEVGGGRQNEFTQAGVEMLGDSSSESDAEIIAMAINTLKSVGLKEFKIEIGQVEFFKGLAEEAGFSNEDIDAISKQIDKKDLVGVEEILNRYDISTELREIVLKLTGLFGSVDVIKEFKKASINGRSLKAIENVEEVVSILCDYGLSEYVSIDLGMLKSLNYDTGITFRGFTNGVGFPILSGARYDNLTSSFGKECPATGFSLRINMLMTAMEKAGHTFERPSVDSLVCYEKTNRKRAIEIAEALRKQDMKIETFVLTKGIDQAKKYAASKKIGGIIYIRDNDKITVYDIKNNITEETSFDTLLNNQ</sequence>
<protein>
    <recommendedName>
        <fullName evidence="1">ATP phosphoribosyltransferase regulatory subunit</fullName>
    </recommendedName>
</protein>
<comment type="function">
    <text evidence="1">Required for the first step of histidine biosynthesis. May allow the feedback regulation of ATP phosphoribosyltransferase activity by histidine.</text>
</comment>
<comment type="pathway">
    <text evidence="1">Amino-acid biosynthesis; L-histidine biosynthesis; L-histidine from 5-phospho-alpha-D-ribose 1-diphosphate: step 1/9.</text>
</comment>
<comment type="subunit">
    <text evidence="1">Heteromultimer composed of HisG and HisZ subunits.</text>
</comment>
<comment type="subcellular location">
    <subcellularLocation>
        <location evidence="1">Cytoplasm</location>
    </subcellularLocation>
</comment>
<comment type="miscellaneous">
    <text>This function is generally fulfilled by the C-terminal part of HisG, which is missing in some bacteria such as this one.</text>
</comment>
<comment type="similarity">
    <text evidence="1">Belongs to the class-II aminoacyl-tRNA synthetase family. HisZ subfamily.</text>
</comment>
<proteinExistence type="inferred from homology"/>
<name>HISZ_RUMCH</name>
<gene>
    <name evidence="1" type="primary">hisZ</name>
    <name type="ordered locus">Ccel_0380</name>
</gene>